<name>Y2640_GLOVI</name>
<proteinExistence type="inferred from homology"/>
<gene>
    <name type="ordered locus">gsr2640</name>
</gene>
<protein>
    <recommendedName>
        <fullName evidence="1">UPF0391 membrane protein gsr2640</fullName>
    </recommendedName>
</protein>
<sequence>MLNLLWLVVVLMVIAALLGFGGVVSSLQSVAWFLIVAAVVLAVVGFVTGRRAL</sequence>
<evidence type="ECO:0000255" key="1">
    <source>
        <dbReference type="HAMAP-Rule" id="MF_01361"/>
    </source>
</evidence>
<evidence type="ECO:0000305" key="2"/>
<organism>
    <name type="scientific">Gloeobacter violaceus (strain ATCC 29082 / PCC 7421)</name>
    <dbReference type="NCBI Taxonomy" id="251221"/>
    <lineage>
        <taxon>Bacteria</taxon>
        <taxon>Bacillati</taxon>
        <taxon>Cyanobacteriota</taxon>
        <taxon>Cyanophyceae</taxon>
        <taxon>Gloeobacterales</taxon>
        <taxon>Gloeobacteraceae</taxon>
        <taxon>Gloeobacter</taxon>
    </lineage>
</organism>
<keyword id="KW-1003">Cell membrane</keyword>
<keyword id="KW-0472">Membrane</keyword>
<keyword id="KW-1185">Reference proteome</keyword>
<keyword id="KW-0812">Transmembrane</keyword>
<keyword id="KW-1133">Transmembrane helix</keyword>
<feature type="chain" id="PRO_0000256738" description="UPF0391 membrane protein gsr2640">
    <location>
        <begin position="1"/>
        <end position="53"/>
    </location>
</feature>
<feature type="transmembrane region" description="Helical" evidence="1">
    <location>
        <begin position="4"/>
        <end position="24"/>
    </location>
</feature>
<feature type="transmembrane region" description="Helical" evidence="1">
    <location>
        <begin position="32"/>
        <end position="49"/>
    </location>
</feature>
<comment type="subcellular location">
    <subcellularLocation>
        <location evidence="1">Cell membrane</location>
        <topology evidence="1">Multi-pass membrane protein</topology>
    </subcellularLocation>
</comment>
<comment type="similarity">
    <text evidence="1">Belongs to the UPF0391 family.</text>
</comment>
<comment type="sequence caution" evidence="2">
    <conflict type="erroneous initiation">
        <sequence resource="EMBL-CDS" id="BAC90581"/>
    </conflict>
</comment>
<accession>Q7NH97</accession>
<reference key="1">
    <citation type="journal article" date="2003" name="DNA Res.">
        <title>Complete genome structure of Gloeobacter violaceus PCC 7421, a cyanobacterium that lacks thylakoids.</title>
        <authorList>
            <person name="Nakamura Y."/>
            <person name="Kaneko T."/>
            <person name="Sato S."/>
            <person name="Mimuro M."/>
            <person name="Miyashita H."/>
            <person name="Tsuchiya T."/>
            <person name="Sasamoto S."/>
            <person name="Watanabe A."/>
            <person name="Kawashima K."/>
            <person name="Kishida Y."/>
            <person name="Kiyokawa C."/>
            <person name="Kohara M."/>
            <person name="Matsumoto M."/>
            <person name="Matsuno A."/>
            <person name="Nakazaki N."/>
            <person name="Shimpo S."/>
            <person name="Takeuchi C."/>
            <person name="Yamada M."/>
            <person name="Tabata S."/>
        </authorList>
    </citation>
    <scope>NUCLEOTIDE SEQUENCE [LARGE SCALE GENOMIC DNA]</scope>
    <source>
        <strain>ATCC 29082 / PCC 7421</strain>
    </source>
</reference>
<dbReference type="EMBL" id="BA000045">
    <property type="protein sequence ID" value="BAC90581.1"/>
    <property type="status" value="ALT_INIT"/>
    <property type="molecule type" value="Genomic_DNA"/>
</dbReference>
<dbReference type="RefSeq" id="NP_925586.1">
    <property type="nucleotide sequence ID" value="NC_005125.1"/>
</dbReference>
<dbReference type="RefSeq" id="WP_164929068.1">
    <property type="nucleotide sequence ID" value="NC_005125.1"/>
</dbReference>
<dbReference type="STRING" id="251221.gene:10760141"/>
<dbReference type="EnsemblBacteria" id="BAC90581">
    <property type="protein sequence ID" value="BAC90581"/>
    <property type="gene ID" value="BAC90581"/>
</dbReference>
<dbReference type="KEGG" id="gvi:gsr2640"/>
<dbReference type="HOGENOM" id="CLU_3062013_0_0_3"/>
<dbReference type="InParanoid" id="Q7NH97"/>
<dbReference type="Proteomes" id="UP000000557">
    <property type="component" value="Chromosome"/>
</dbReference>
<dbReference type="GO" id="GO:0005886">
    <property type="term" value="C:plasma membrane"/>
    <property type="evidence" value="ECO:0007669"/>
    <property type="project" value="UniProtKB-SubCell"/>
</dbReference>
<dbReference type="HAMAP" id="MF_01361">
    <property type="entry name" value="UPF0391"/>
    <property type="match status" value="1"/>
</dbReference>
<dbReference type="InterPro" id="IPR009760">
    <property type="entry name" value="DUF1328"/>
</dbReference>
<dbReference type="PIRSF" id="PIRSF036466">
    <property type="entry name" value="UCP036466"/>
    <property type="match status" value="1"/>
</dbReference>